<name>PXDC2_MOUSE</name>
<dbReference type="EMBL" id="AF378761">
    <property type="protein sequence ID" value="AAL11998.1"/>
    <property type="molecule type" value="mRNA"/>
</dbReference>
<dbReference type="EMBL" id="AK004640">
    <property type="protein sequence ID" value="BAB23431.1"/>
    <property type="molecule type" value="mRNA"/>
</dbReference>
<dbReference type="EMBL" id="AK154921">
    <property type="protein sequence ID" value="BAE32927.1"/>
    <property type="molecule type" value="mRNA"/>
</dbReference>
<dbReference type="EMBL" id="BC057881">
    <property type="protein sequence ID" value="AAH57881.1"/>
    <property type="molecule type" value="mRNA"/>
</dbReference>
<dbReference type="CCDS" id="CCDS15705.1"/>
<dbReference type="RefSeq" id="NP_080438.2">
    <property type="nucleotide sequence ID" value="NM_026162.6"/>
</dbReference>
<dbReference type="BioGRID" id="212194">
    <property type="interactions" value="4"/>
</dbReference>
<dbReference type="FunCoup" id="Q9DC11">
    <property type="interactions" value="490"/>
</dbReference>
<dbReference type="STRING" id="10090.ENSMUSP00000028081"/>
<dbReference type="GlyCosmos" id="Q9DC11">
    <property type="glycosylation" value="2 sites, No reported glycans"/>
</dbReference>
<dbReference type="GlyGen" id="Q9DC11">
    <property type="glycosylation" value="2 sites"/>
</dbReference>
<dbReference type="iPTMnet" id="Q9DC11"/>
<dbReference type="PhosphoSitePlus" id="Q9DC11"/>
<dbReference type="CPTAC" id="non-CPTAC-3935"/>
<dbReference type="jPOST" id="Q9DC11"/>
<dbReference type="PaxDb" id="10090-ENSMUSP00000028081"/>
<dbReference type="PeptideAtlas" id="Q9DC11"/>
<dbReference type="ProteomicsDB" id="301928"/>
<dbReference type="Antibodypedia" id="25453">
    <property type="antibodies" value="172 antibodies from 32 providers"/>
</dbReference>
<dbReference type="DNASU" id="67448"/>
<dbReference type="Ensembl" id="ENSMUST00000028081.13">
    <property type="protein sequence ID" value="ENSMUSP00000028081.7"/>
    <property type="gene ID" value="ENSMUSG00000026748.14"/>
</dbReference>
<dbReference type="GeneID" id="67448"/>
<dbReference type="KEGG" id="mmu:67448"/>
<dbReference type="UCSC" id="uc008ikz.2">
    <property type="organism name" value="mouse"/>
</dbReference>
<dbReference type="AGR" id="MGI:1914698"/>
<dbReference type="CTD" id="84898"/>
<dbReference type="MGI" id="MGI:1914698">
    <property type="gene designation" value="Plxdc2"/>
</dbReference>
<dbReference type="VEuPathDB" id="HostDB:ENSMUSG00000026748"/>
<dbReference type="eggNOG" id="KOG3848">
    <property type="taxonomic scope" value="Eukaryota"/>
</dbReference>
<dbReference type="GeneTree" id="ENSGT00440000033408"/>
<dbReference type="InParanoid" id="Q9DC11"/>
<dbReference type="OMA" id="XIPVLVT"/>
<dbReference type="OrthoDB" id="6285106at2759"/>
<dbReference type="PhylomeDB" id="Q9DC11"/>
<dbReference type="TreeFam" id="TF314400"/>
<dbReference type="BioGRID-ORCS" id="67448">
    <property type="hits" value="0 hits in 76 CRISPR screens"/>
</dbReference>
<dbReference type="ChiTaRS" id="Plxdc2">
    <property type="organism name" value="mouse"/>
</dbReference>
<dbReference type="PRO" id="PR:Q9DC11"/>
<dbReference type="Proteomes" id="UP000000589">
    <property type="component" value="Chromosome 2"/>
</dbReference>
<dbReference type="RNAct" id="Q9DC11">
    <property type="molecule type" value="protein"/>
</dbReference>
<dbReference type="Bgee" id="ENSMUSG00000026748">
    <property type="expression patterns" value="Expressed in vestibular membrane of cochlear duct and 257 other cell types or tissues"/>
</dbReference>
<dbReference type="ExpressionAtlas" id="Q9DC11">
    <property type="expression patterns" value="baseline and differential"/>
</dbReference>
<dbReference type="GO" id="GO:0062023">
    <property type="term" value="C:collagen-containing extracellular matrix"/>
    <property type="evidence" value="ECO:0007005"/>
    <property type="project" value="BHF-UCL"/>
</dbReference>
<dbReference type="GO" id="GO:0005886">
    <property type="term" value="C:plasma membrane"/>
    <property type="evidence" value="ECO:0000266"/>
    <property type="project" value="MGI"/>
</dbReference>
<dbReference type="InterPro" id="IPR002165">
    <property type="entry name" value="Plexin_repeat"/>
</dbReference>
<dbReference type="InterPro" id="IPR031152">
    <property type="entry name" value="PLXDC"/>
</dbReference>
<dbReference type="InterPro" id="IPR016201">
    <property type="entry name" value="PSI"/>
</dbReference>
<dbReference type="PANTHER" id="PTHR13055:SF11">
    <property type="entry name" value="PLEXIN DOMAIN-CONTAINING PROTEIN 2"/>
    <property type="match status" value="1"/>
</dbReference>
<dbReference type="PANTHER" id="PTHR13055">
    <property type="entry name" value="TUMOR ENDOTHELIAL MARKER 7 RELATED"/>
    <property type="match status" value="1"/>
</dbReference>
<dbReference type="Pfam" id="PF01437">
    <property type="entry name" value="PSI"/>
    <property type="match status" value="1"/>
</dbReference>
<dbReference type="SMART" id="SM00423">
    <property type="entry name" value="PSI"/>
    <property type="match status" value="1"/>
</dbReference>
<evidence type="ECO:0000255" key="1"/>
<evidence type="ECO:0000256" key="2">
    <source>
        <dbReference type="SAM" id="MobiDB-lite"/>
    </source>
</evidence>
<evidence type="ECO:0000269" key="3">
    <source>
    </source>
</evidence>
<evidence type="ECO:0000269" key="4">
    <source>
    </source>
</evidence>
<evidence type="ECO:0000305" key="5"/>
<evidence type="ECO:0007744" key="6">
    <source>
    </source>
</evidence>
<accession>Q9DC11</accession>
<accession>Q6PET5</accession>
<accession>Q91ZV6</accession>
<reference key="1">
    <citation type="journal article" date="2001" name="Cancer Res.">
        <title>Cell surface tumor endothelial markers are conserved in mice and humans.</title>
        <authorList>
            <person name="Carson-Walter E.B."/>
            <person name="Watkins D.N."/>
            <person name="Nanda A."/>
            <person name="Vogelstein B."/>
            <person name="Kinzler K.W."/>
            <person name="St Croix B."/>
        </authorList>
    </citation>
    <scope>NUCLEOTIDE SEQUENCE [MRNA]</scope>
    <scope>FUNCTION</scope>
    <scope>TISSUE SPECIFICITY</scope>
</reference>
<reference key="2">
    <citation type="journal article" date="2005" name="Science">
        <title>The transcriptional landscape of the mammalian genome.</title>
        <authorList>
            <person name="Carninci P."/>
            <person name="Kasukawa T."/>
            <person name="Katayama S."/>
            <person name="Gough J."/>
            <person name="Frith M.C."/>
            <person name="Maeda N."/>
            <person name="Oyama R."/>
            <person name="Ravasi T."/>
            <person name="Lenhard B."/>
            <person name="Wells C."/>
            <person name="Kodzius R."/>
            <person name="Shimokawa K."/>
            <person name="Bajic V.B."/>
            <person name="Brenner S.E."/>
            <person name="Batalov S."/>
            <person name="Forrest A.R."/>
            <person name="Zavolan M."/>
            <person name="Davis M.J."/>
            <person name="Wilming L.G."/>
            <person name="Aidinis V."/>
            <person name="Allen J.E."/>
            <person name="Ambesi-Impiombato A."/>
            <person name="Apweiler R."/>
            <person name="Aturaliya R.N."/>
            <person name="Bailey T.L."/>
            <person name="Bansal M."/>
            <person name="Baxter L."/>
            <person name="Beisel K.W."/>
            <person name="Bersano T."/>
            <person name="Bono H."/>
            <person name="Chalk A.M."/>
            <person name="Chiu K.P."/>
            <person name="Choudhary V."/>
            <person name="Christoffels A."/>
            <person name="Clutterbuck D.R."/>
            <person name="Crowe M.L."/>
            <person name="Dalla E."/>
            <person name="Dalrymple B.P."/>
            <person name="de Bono B."/>
            <person name="Della Gatta G."/>
            <person name="di Bernardo D."/>
            <person name="Down T."/>
            <person name="Engstrom P."/>
            <person name="Fagiolini M."/>
            <person name="Faulkner G."/>
            <person name="Fletcher C.F."/>
            <person name="Fukushima T."/>
            <person name="Furuno M."/>
            <person name="Futaki S."/>
            <person name="Gariboldi M."/>
            <person name="Georgii-Hemming P."/>
            <person name="Gingeras T.R."/>
            <person name="Gojobori T."/>
            <person name="Green R.E."/>
            <person name="Gustincich S."/>
            <person name="Harbers M."/>
            <person name="Hayashi Y."/>
            <person name="Hensch T.K."/>
            <person name="Hirokawa N."/>
            <person name="Hill D."/>
            <person name="Huminiecki L."/>
            <person name="Iacono M."/>
            <person name="Ikeo K."/>
            <person name="Iwama A."/>
            <person name="Ishikawa T."/>
            <person name="Jakt M."/>
            <person name="Kanapin A."/>
            <person name="Katoh M."/>
            <person name="Kawasawa Y."/>
            <person name="Kelso J."/>
            <person name="Kitamura H."/>
            <person name="Kitano H."/>
            <person name="Kollias G."/>
            <person name="Krishnan S.P."/>
            <person name="Kruger A."/>
            <person name="Kummerfeld S.K."/>
            <person name="Kurochkin I.V."/>
            <person name="Lareau L.F."/>
            <person name="Lazarevic D."/>
            <person name="Lipovich L."/>
            <person name="Liu J."/>
            <person name="Liuni S."/>
            <person name="McWilliam S."/>
            <person name="Madan Babu M."/>
            <person name="Madera M."/>
            <person name="Marchionni L."/>
            <person name="Matsuda H."/>
            <person name="Matsuzawa S."/>
            <person name="Miki H."/>
            <person name="Mignone F."/>
            <person name="Miyake S."/>
            <person name="Morris K."/>
            <person name="Mottagui-Tabar S."/>
            <person name="Mulder N."/>
            <person name="Nakano N."/>
            <person name="Nakauchi H."/>
            <person name="Ng P."/>
            <person name="Nilsson R."/>
            <person name="Nishiguchi S."/>
            <person name="Nishikawa S."/>
            <person name="Nori F."/>
            <person name="Ohara O."/>
            <person name="Okazaki Y."/>
            <person name="Orlando V."/>
            <person name="Pang K.C."/>
            <person name="Pavan W.J."/>
            <person name="Pavesi G."/>
            <person name="Pesole G."/>
            <person name="Petrovsky N."/>
            <person name="Piazza S."/>
            <person name="Reed J."/>
            <person name="Reid J.F."/>
            <person name="Ring B.Z."/>
            <person name="Ringwald M."/>
            <person name="Rost B."/>
            <person name="Ruan Y."/>
            <person name="Salzberg S.L."/>
            <person name="Sandelin A."/>
            <person name="Schneider C."/>
            <person name="Schoenbach C."/>
            <person name="Sekiguchi K."/>
            <person name="Semple C.A."/>
            <person name="Seno S."/>
            <person name="Sessa L."/>
            <person name="Sheng Y."/>
            <person name="Shibata Y."/>
            <person name="Shimada H."/>
            <person name="Shimada K."/>
            <person name="Silva D."/>
            <person name="Sinclair B."/>
            <person name="Sperling S."/>
            <person name="Stupka E."/>
            <person name="Sugiura K."/>
            <person name="Sultana R."/>
            <person name="Takenaka Y."/>
            <person name="Taki K."/>
            <person name="Tammoja K."/>
            <person name="Tan S.L."/>
            <person name="Tang S."/>
            <person name="Taylor M.S."/>
            <person name="Tegner J."/>
            <person name="Teichmann S.A."/>
            <person name="Ueda H.R."/>
            <person name="van Nimwegen E."/>
            <person name="Verardo R."/>
            <person name="Wei C.L."/>
            <person name="Yagi K."/>
            <person name="Yamanishi H."/>
            <person name="Zabarovsky E."/>
            <person name="Zhu S."/>
            <person name="Zimmer A."/>
            <person name="Hide W."/>
            <person name="Bult C."/>
            <person name="Grimmond S.M."/>
            <person name="Teasdale R.D."/>
            <person name="Liu E.T."/>
            <person name="Brusic V."/>
            <person name="Quackenbush J."/>
            <person name="Wahlestedt C."/>
            <person name="Mattick J.S."/>
            <person name="Hume D.A."/>
            <person name="Kai C."/>
            <person name="Sasaki D."/>
            <person name="Tomaru Y."/>
            <person name="Fukuda S."/>
            <person name="Kanamori-Katayama M."/>
            <person name="Suzuki M."/>
            <person name="Aoki J."/>
            <person name="Arakawa T."/>
            <person name="Iida J."/>
            <person name="Imamura K."/>
            <person name="Itoh M."/>
            <person name="Kato T."/>
            <person name="Kawaji H."/>
            <person name="Kawagashira N."/>
            <person name="Kawashima T."/>
            <person name="Kojima M."/>
            <person name="Kondo S."/>
            <person name="Konno H."/>
            <person name="Nakano K."/>
            <person name="Ninomiya N."/>
            <person name="Nishio T."/>
            <person name="Okada M."/>
            <person name="Plessy C."/>
            <person name="Shibata K."/>
            <person name="Shiraki T."/>
            <person name="Suzuki S."/>
            <person name="Tagami M."/>
            <person name="Waki K."/>
            <person name="Watahiki A."/>
            <person name="Okamura-Oho Y."/>
            <person name="Suzuki H."/>
            <person name="Kawai J."/>
            <person name="Hayashizaki Y."/>
        </authorList>
    </citation>
    <scope>NUCLEOTIDE SEQUENCE [LARGE SCALE MRNA]</scope>
    <source>
        <strain>C57BL/6J</strain>
        <strain>NOD</strain>
        <tissue>Lung</tissue>
    </source>
</reference>
<reference key="3">
    <citation type="journal article" date="2004" name="Genome Res.">
        <title>The status, quality, and expansion of the NIH full-length cDNA project: the Mammalian Gene Collection (MGC).</title>
        <authorList>
            <consortium name="The MGC Project Team"/>
        </authorList>
    </citation>
    <scope>NUCLEOTIDE SEQUENCE [LARGE SCALE MRNA]</scope>
    <source>
        <strain>NMRI</strain>
        <tissue>Mammary gland</tissue>
    </source>
</reference>
<reference key="4">
    <citation type="journal article" date="2004" name="Cancer Res.">
        <title>Identification of a binding partner for the endothelial cell surface proteins TEM7 and TEM7R.</title>
        <authorList>
            <person name="Nanda A."/>
            <person name="Buckhaults P."/>
            <person name="Seaman S."/>
            <person name="Agrawal N."/>
            <person name="Boutin P."/>
            <person name="Shankara S."/>
            <person name="Nacht M."/>
            <person name="Teicher B."/>
            <person name="Stampfl J."/>
            <person name="Singh S."/>
            <person name="Vogelstein B."/>
            <person name="Kinzler K.W."/>
            <person name="St Croix B."/>
        </authorList>
    </citation>
    <scope>INTERACTION WITH CTTN</scope>
</reference>
<reference key="5">
    <citation type="journal article" date="2010" name="Cell">
        <title>A tissue-specific atlas of mouse protein phosphorylation and expression.</title>
        <authorList>
            <person name="Huttlin E.L."/>
            <person name="Jedrychowski M.P."/>
            <person name="Elias J.E."/>
            <person name="Goswami T."/>
            <person name="Rad R."/>
            <person name="Beausoleil S.A."/>
            <person name="Villen J."/>
            <person name="Haas W."/>
            <person name="Sowa M.E."/>
            <person name="Gygi S.P."/>
        </authorList>
    </citation>
    <scope>PHOSPHORYLATION [LARGE SCALE ANALYSIS] AT SER-507</scope>
    <scope>IDENTIFICATION BY MASS SPECTROMETRY [LARGE SCALE ANALYSIS]</scope>
    <source>
        <tissue>Brain</tissue>
        <tissue>Brown adipose tissue</tissue>
        <tissue>Heart</tissue>
        <tissue>Kidney</tissue>
        <tissue>Lung</tissue>
        <tissue>Pancreas</tissue>
        <tissue>Spleen</tissue>
        <tissue>Testis</tissue>
    </source>
</reference>
<protein>
    <recommendedName>
        <fullName>Plexin domain-containing protein 2</fullName>
    </recommendedName>
    <alternativeName>
        <fullName>Tumor endothelial marker 7-related protein</fullName>
    </alternativeName>
</protein>
<feature type="signal peptide" evidence="1">
    <location>
        <begin position="1"/>
        <end position="30"/>
    </location>
</feature>
<feature type="chain" id="PRO_0000234575" description="Plexin domain-containing protein 2">
    <location>
        <begin position="31"/>
        <end position="530"/>
    </location>
</feature>
<feature type="topological domain" description="Extracellular" evidence="1">
    <location>
        <begin position="31"/>
        <end position="455"/>
    </location>
</feature>
<feature type="transmembrane region" description="Helical" evidence="1">
    <location>
        <begin position="456"/>
        <end position="476"/>
    </location>
</feature>
<feature type="topological domain" description="Cytoplasmic" evidence="1">
    <location>
        <begin position="477"/>
        <end position="530"/>
    </location>
</feature>
<feature type="domain" description="PSI">
    <location>
        <begin position="327"/>
        <end position="372"/>
    </location>
</feature>
<feature type="region of interest" description="Disordered" evidence="2">
    <location>
        <begin position="378"/>
        <end position="399"/>
    </location>
</feature>
<feature type="compositionally biased region" description="Basic and acidic residues" evidence="2">
    <location>
        <begin position="378"/>
        <end position="387"/>
    </location>
</feature>
<feature type="compositionally biased region" description="Low complexity" evidence="2">
    <location>
        <begin position="390"/>
        <end position="399"/>
    </location>
</feature>
<feature type="modified residue" description="Phosphoserine" evidence="6">
    <location>
        <position position="507"/>
    </location>
</feature>
<feature type="glycosylation site" description="N-linked (GlcNAc...) asparagine" evidence="1">
    <location>
        <position position="103"/>
    </location>
</feature>
<feature type="glycosylation site" description="N-linked (GlcNAc...) asparagine" evidence="1">
    <location>
        <position position="160"/>
    </location>
</feature>
<feature type="sequence conflict" description="In Ref. 3; AAH57881." evidence="5" ref="3">
    <original>R</original>
    <variation>W</variation>
    <location>
        <position position="5"/>
    </location>
</feature>
<feature type="sequence conflict" description="In Ref. 1; AAL11998." evidence="5" ref="1">
    <original>Q</original>
    <variation>H</variation>
    <location>
        <position position="26"/>
    </location>
</feature>
<organism>
    <name type="scientific">Mus musculus</name>
    <name type="common">Mouse</name>
    <dbReference type="NCBI Taxonomy" id="10090"/>
    <lineage>
        <taxon>Eukaryota</taxon>
        <taxon>Metazoa</taxon>
        <taxon>Chordata</taxon>
        <taxon>Craniata</taxon>
        <taxon>Vertebrata</taxon>
        <taxon>Euteleostomi</taxon>
        <taxon>Mammalia</taxon>
        <taxon>Eutheria</taxon>
        <taxon>Euarchontoglires</taxon>
        <taxon>Glires</taxon>
        <taxon>Rodentia</taxon>
        <taxon>Myomorpha</taxon>
        <taxon>Muroidea</taxon>
        <taxon>Muridae</taxon>
        <taxon>Murinae</taxon>
        <taxon>Mus</taxon>
        <taxon>Mus</taxon>
    </lineage>
</organism>
<comment type="function">
    <text evidence="3">May play a role in tumor angiogenesis.</text>
</comment>
<comment type="subunit">
    <text evidence="4">Interacts with CTTN.</text>
</comment>
<comment type="subcellular location">
    <subcellularLocation>
        <location evidence="5">Membrane</location>
        <topology evidence="5">Single-pass type I membrane protein</topology>
    </subcellularLocation>
</comment>
<comment type="tissue specificity">
    <text evidence="3">Expressed in tumor endothelium and in vessels of some normal tissues, such as the muscle and lung.</text>
</comment>
<comment type="similarity">
    <text evidence="5">Belongs to the plexin family.</text>
</comment>
<gene>
    <name type="primary">Plxdc2</name>
    <name type="synonym">Tem7r</name>
</gene>
<keyword id="KW-0325">Glycoprotein</keyword>
<keyword id="KW-0472">Membrane</keyword>
<keyword id="KW-0597">Phosphoprotein</keyword>
<keyword id="KW-1185">Reference proteome</keyword>
<keyword id="KW-0732">Signal</keyword>
<keyword id="KW-0812">Transmembrane</keyword>
<keyword id="KW-1133">Transmembrane helix</keyword>
<proteinExistence type="evidence at protein level"/>
<sequence length="530" mass="59616">MARFRRADLAAAGVMLLCHFLTDRFQFAHGEPGHHTNDWIYEVTNAFPWNEEGVEVDSQAYNHRWKRNVDPFKAVDTNRASMGQASPESKGFTDLLLDDGQDNNTQIEEDTDHNYYISRIYGPADSASRDLWVNIDQMEKDKVKIHGILSNTHRQAARVNLSFDFPFYGHFLNEVTVATGGFIYTGEVVHRMLTATQYIAPLMANFDPSVSRNSTVRYFDNGTALVVQWDHVHLQDNYNLGSFTFQATLLMDGRIIFGYKEIPVLVTQISSTNHPVKVGLSDAFVVVHRIQQIPNVRRRTIYEYHRVELQMSKITNISAVEMTPLPTCLQFNGCGPCVSSQIGFNCSWCSKLQRCSSGFDRHRQDWVDSGCPEEVQSKEKMCEKTEPGETSQTTTTSHTTTMQFRVLTTTRRAVTSQMPTSLPTEDDTKIALHLKDSGASTDDSAAEKKGGTLHAGLIVGILILVLIIAAAILVTVYMYHHPTSAASIFFIERRPSRWPAMKFRRGSGHPAYAEVEPVGEKEGFIVSEQC</sequence>